<organism>
    <name type="scientific">Chlamydia muridarum (strain MoPn / Nigg)</name>
    <dbReference type="NCBI Taxonomy" id="243161"/>
    <lineage>
        <taxon>Bacteria</taxon>
        <taxon>Pseudomonadati</taxon>
        <taxon>Chlamydiota</taxon>
        <taxon>Chlamydiia</taxon>
        <taxon>Chlamydiales</taxon>
        <taxon>Chlamydiaceae</taxon>
        <taxon>Chlamydia/Chlamydophila group</taxon>
        <taxon>Chlamydia</taxon>
    </lineage>
</organism>
<proteinExistence type="inferred from homology"/>
<gene>
    <name evidence="1" type="primary">frr</name>
    <name type="synonym">rrf</name>
    <name type="ordered locus">TC_0048</name>
</gene>
<sequence length="179" mass="20026">MTLTSAEKEMSGVLTFFQKEIRGFRTGKAHPALVETVTVEVYGTTMRLSDIASISVSDTRQLLISPYDAGNVSAISKGILAANLNLQPIVEGATVRINVPEPTEEYRREVIKQLKRKSEEAKVSIRNIRRTCNDRLKKDDSLTEDAVKGLEKKIQELTDKFCKQIEELAKQKEAELSSI</sequence>
<protein>
    <recommendedName>
        <fullName evidence="1">Ribosome-recycling factor</fullName>
        <shortName evidence="1">RRF</shortName>
    </recommendedName>
    <alternativeName>
        <fullName evidence="1">Ribosome-releasing factor</fullName>
    </alternativeName>
</protein>
<reference key="1">
    <citation type="journal article" date="1997" name="Arch. Biochem. Biophys.">
        <title>Elongation factor Ts of Chlamydia trachomatis: structure of the gene and properties of the protein.</title>
        <authorList>
            <person name="Zhang Y.X."/>
            <person name="Tao J."/>
            <person name="Zhou M."/>
            <person name="Meng Q."/>
            <person name="Zhang L."/>
            <person name="Shen L."/>
            <person name="Klein R."/>
            <person name="Miller D.L."/>
        </authorList>
    </citation>
    <scope>NUCLEOTIDE SEQUENCE [GENOMIC DNA]</scope>
    <source>
        <strain>MoPn</strain>
    </source>
</reference>
<reference key="2">
    <citation type="journal article" date="2000" name="Nucleic Acids Res.">
        <title>Genome sequences of Chlamydia trachomatis MoPn and Chlamydia pneumoniae AR39.</title>
        <authorList>
            <person name="Read T.D."/>
            <person name="Brunham R.C."/>
            <person name="Shen C."/>
            <person name="Gill S.R."/>
            <person name="Heidelberg J.F."/>
            <person name="White O."/>
            <person name="Hickey E.K."/>
            <person name="Peterson J.D."/>
            <person name="Utterback T.R."/>
            <person name="Berry K.J."/>
            <person name="Bass S."/>
            <person name="Linher K.D."/>
            <person name="Weidman J.F."/>
            <person name="Khouri H.M."/>
            <person name="Craven B."/>
            <person name="Bowman C."/>
            <person name="Dodson R.J."/>
            <person name="Gwinn M.L."/>
            <person name="Nelson W.C."/>
            <person name="DeBoy R.T."/>
            <person name="Kolonay J.F."/>
            <person name="McClarty G."/>
            <person name="Salzberg S.L."/>
            <person name="Eisen J.A."/>
            <person name="Fraser C.M."/>
        </authorList>
    </citation>
    <scope>NUCLEOTIDE SEQUENCE [LARGE SCALE GENOMIC DNA]</scope>
    <source>
        <strain>MoPn / Nigg</strain>
    </source>
</reference>
<dbReference type="EMBL" id="U60196">
    <property type="protein sequence ID" value="AAB07072.1"/>
    <property type="molecule type" value="Genomic_DNA"/>
</dbReference>
<dbReference type="EMBL" id="AE002160">
    <property type="protein sequence ID" value="AAF38937.1"/>
    <property type="molecule type" value="Genomic_DNA"/>
</dbReference>
<dbReference type="PIR" id="G81746">
    <property type="entry name" value="G81746"/>
</dbReference>
<dbReference type="RefSeq" id="WP_010229219.1">
    <property type="nucleotide sequence ID" value="NZ_CP063055.1"/>
</dbReference>
<dbReference type="SMR" id="P71148"/>
<dbReference type="GeneID" id="1245576"/>
<dbReference type="KEGG" id="cmu:TC_0048"/>
<dbReference type="eggNOG" id="COG0233">
    <property type="taxonomic scope" value="Bacteria"/>
</dbReference>
<dbReference type="HOGENOM" id="CLU_073981_2_1_0"/>
<dbReference type="OrthoDB" id="9804006at2"/>
<dbReference type="Proteomes" id="UP000000800">
    <property type="component" value="Chromosome"/>
</dbReference>
<dbReference type="GO" id="GO:0005737">
    <property type="term" value="C:cytoplasm"/>
    <property type="evidence" value="ECO:0007669"/>
    <property type="project" value="UniProtKB-SubCell"/>
</dbReference>
<dbReference type="GO" id="GO:0043023">
    <property type="term" value="F:ribosomal large subunit binding"/>
    <property type="evidence" value="ECO:0007669"/>
    <property type="project" value="TreeGrafter"/>
</dbReference>
<dbReference type="GO" id="GO:0006415">
    <property type="term" value="P:translational termination"/>
    <property type="evidence" value="ECO:0007669"/>
    <property type="project" value="UniProtKB-UniRule"/>
</dbReference>
<dbReference type="CDD" id="cd00520">
    <property type="entry name" value="RRF"/>
    <property type="match status" value="1"/>
</dbReference>
<dbReference type="FunFam" id="1.10.132.20:FF:000001">
    <property type="entry name" value="Ribosome-recycling factor"/>
    <property type="match status" value="1"/>
</dbReference>
<dbReference type="FunFam" id="3.30.1360.40:FF:000001">
    <property type="entry name" value="Ribosome-recycling factor"/>
    <property type="match status" value="1"/>
</dbReference>
<dbReference type="Gene3D" id="3.30.1360.40">
    <property type="match status" value="1"/>
</dbReference>
<dbReference type="Gene3D" id="1.10.132.20">
    <property type="entry name" value="Ribosome-recycling factor"/>
    <property type="match status" value="1"/>
</dbReference>
<dbReference type="HAMAP" id="MF_00040">
    <property type="entry name" value="RRF"/>
    <property type="match status" value="1"/>
</dbReference>
<dbReference type="InterPro" id="IPR002661">
    <property type="entry name" value="Ribosome_recyc_fac"/>
</dbReference>
<dbReference type="InterPro" id="IPR023584">
    <property type="entry name" value="Ribosome_recyc_fac_dom"/>
</dbReference>
<dbReference type="InterPro" id="IPR036191">
    <property type="entry name" value="RRF_sf"/>
</dbReference>
<dbReference type="NCBIfam" id="TIGR00496">
    <property type="entry name" value="frr"/>
    <property type="match status" value="1"/>
</dbReference>
<dbReference type="PANTHER" id="PTHR20982:SF3">
    <property type="entry name" value="MITOCHONDRIAL RIBOSOME RECYCLING FACTOR PSEUDO 1"/>
    <property type="match status" value="1"/>
</dbReference>
<dbReference type="PANTHER" id="PTHR20982">
    <property type="entry name" value="RIBOSOME RECYCLING FACTOR"/>
    <property type="match status" value="1"/>
</dbReference>
<dbReference type="Pfam" id="PF01765">
    <property type="entry name" value="RRF"/>
    <property type="match status" value="1"/>
</dbReference>
<dbReference type="SUPFAM" id="SSF55194">
    <property type="entry name" value="Ribosome recycling factor, RRF"/>
    <property type="match status" value="1"/>
</dbReference>
<name>RRF_CHLMU</name>
<evidence type="ECO:0000255" key="1">
    <source>
        <dbReference type="HAMAP-Rule" id="MF_00040"/>
    </source>
</evidence>
<comment type="function">
    <text evidence="1">Responsible for the release of ribosomes from messenger RNA at the termination of protein biosynthesis. May increase the efficiency of translation by recycling ribosomes from one round of translation to another.</text>
</comment>
<comment type="subcellular location">
    <subcellularLocation>
        <location evidence="1">Cytoplasm</location>
    </subcellularLocation>
</comment>
<comment type="similarity">
    <text evidence="1">Belongs to the RRF family.</text>
</comment>
<accession>P71148</accession>
<keyword id="KW-0963">Cytoplasm</keyword>
<keyword id="KW-0648">Protein biosynthesis</keyword>
<feature type="chain" id="PRO_0000167439" description="Ribosome-recycling factor">
    <location>
        <begin position="1"/>
        <end position="179"/>
    </location>
</feature>